<evidence type="ECO:0000255" key="1">
    <source>
        <dbReference type="HAMAP-Rule" id="MF_00015"/>
    </source>
</evidence>
<dbReference type="EC" id="3.4.21.88" evidence="1"/>
<dbReference type="EMBL" id="CP000668">
    <property type="protein sequence ID" value="ABP42007.1"/>
    <property type="molecule type" value="Genomic_DNA"/>
</dbReference>
<dbReference type="RefSeq" id="WP_002209090.1">
    <property type="nucleotide sequence ID" value="NZ_CP009715.1"/>
</dbReference>
<dbReference type="SMR" id="A4TRU5"/>
<dbReference type="GeneID" id="57974290"/>
<dbReference type="KEGG" id="ypp:YPDSF_3657"/>
<dbReference type="PATRIC" id="fig|386656.14.peg.319"/>
<dbReference type="GO" id="GO:0003677">
    <property type="term" value="F:DNA binding"/>
    <property type="evidence" value="ECO:0007669"/>
    <property type="project" value="UniProtKB-UniRule"/>
</dbReference>
<dbReference type="GO" id="GO:0004252">
    <property type="term" value="F:serine-type endopeptidase activity"/>
    <property type="evidence" value="ECO:0007669"/>
    <property type="project" value="UniProtKB-UniRule"/>
</dbReference>
<dbReference type="GO" id="GO:0006281">
    <property type="term" value="P:DNA repair"/>
    <property type="evidence" value="ECO:0007669"/>
    <property type="project" value="UniProtKB-UniRule"/>
</dbReference>
<dbReference type="GO" id="GO:0006260">
    <property type="term" value="P:DNA replication"/>
    <property type="evidence" value="ECO:0007669"/>
    <property type="project" value="UniProtKB-UniRule"/>
</dbReference>
<dbReference type="GO" id="GO:0045892">
    <property type="term" value="P:negative regulation of DNA-templated transcription"/>
    <property type="evidence" value="ECO:0007669"/>
    <property type="project" value="UniProtKB-UniRule"/>
</dbReference>
<dbReference type="GO" id="GO:0006508">
    <property type="term" value="P:proteolysis"/>
    <property type="evidence" value="ECO:0007669"/>
    <property type="project" value="InterPro"/>
</dbReference>
<dbReference type="GO" id="GO:0009432">
    <property type="term" value="P:SOS response"/>
    <property type="evidence" value="ECO:0007669"/>
    <property type="project" value="UniProtKB-UniRule"/>
</dbReference>
<dbReference type="CDD" id="cd06529">
    <property type="entry name" value="S24_LexA-like"/>
    <property type="match status" value="1"/>
</dbReference>
<dbReference type="FunFam" id="1.10.10.10:FF:000009">
    <property type="entry name" value="LexA repressor"/>
    <property type="match status" value="1"/>
</dbReference>
<dbReference type="FunFam" id="2.10.109.10:FF:000001">
    <property type="entry name" value="LexA repressor"/>
    <property type="match status" value="1"/>
</dbReference>
<dbReference type="Gene3D" id="2.10.109.10">
    <property type="entry name" value="Umud Fragment, subunit A"/>
    <property type="match status" value="1"/>
</dbReference>
<dbReference type="Gene3D" id="1.10.10.10">
    <property type="entry name" value="Winged helix-like DNA-binding domain superfamily/Winged helix DNA-binding domain"/>
    <property type="match status" value="1"/>
</dbReference>
<dbReference type="HAMAP" id="MF_00015">
    <property type="entry name" value="LexA"/>
    <property type="match status" value="1"/>
</dbReference>
<dbReference type="InterPro" id="IPR006200">
    <property type="entry name" value="LexA"/>
</dbReference>
<dbReference type="InterPro" id="IPR039418">
    <property type="entry name" value="LexA-like"/>
</dbReference>
<dbReference type="InterPro" id="IPR036286">
    <property type="entry name" value="LexA/Signal_pep-like_sf"/>
</dbReference>
<dbReference type="InterPro" id="IPR006199">
    <property type="entry name" value="LexA_DNA-bd_dom"/>
</dbReference>
<dbReference type="InterPro" id="IPR050077">
    <property type="entry name" value="LexA_repressor"/>
</dbReference>
<dbReference type="InterPro" id="IPR006197">
    <property type="entry name" value="Peptidase_S24_LexA"/>
</dbReference>
<dbReference type="InterPro" id="IPR015927">
    <property type="entry name" value="Peptidase_S24_S26A/B/C"/>
</dbReference>
<dbReference type="InterPro" id="IPR036388">
    <property type="entry name" value="WH-like_DNA-bd_sf"/>
</dbReference>
<dbReference type="InterPro" id="IPR036390">
    <property type="entry name" value="WH_DNA-bd_sf"/>
</dbReference>
<dbReference type="NCBIfam" id="TIGR00498">
    <property type="entry name" value="lexA"/>
    <property type="match status" value="1"/>
</dbReference>
<dbReference type="PANTHER" id="PTHR33516">
    <property type="entry name" value="LEXA REPRESSOR"/>
    <property type="match status" value="1"/>
</dbReference>
<dbReference type="PANTHER" id="PTHR33516:SF2">
    <property type="entry name" value="LEXA REPRESSOR-RELATED"/>
    <property type="match status" value="1"/>
</dbReference>
<dbReference type="Pfam" id="PF01726">
    <property type="entry name" value="LexA_DNA_bind"/>
    <property type="match status" value="1"/>
</dbReference>
<dbReference type="Pfam" id="PF00717">
    <property type="entry name" value="Peptidase_S24"/>
    <property type="match status" value="1"/>
</dbReference>
<dbReference type="PRINTS" id="PR00726">
    <property type="entry name" value="LEXASERPTASE"/>
</dbReference>
<dbReference type="SUPFAM" id="SSF51306">
    <property type="entry name" value="LexA/Signal peptidase"/>
    <property type="match status" value="1"/>
</dbReference>
<dbReference type="SUPFAM" id="SSF46785">
    <property type="entry name" value="Winged helix' DNA-binding domain"/>
    <property type="match status" value="1"/>
</dbReference>
<reference key="1">
    <citation type="submission" date="2007-02" db="EMBL/GenBank/DDBJ databases">
        <title>Complete sequence of chromosome of Yersinia pestis Pestoides F.</title>
        <authorList>
            <consortium name="US DOE Joint Genome Institute"/>
            <person name="Copeland A."/>
            <person name="Lucas S."/>
            <person name="Lapidus A."/>
            <person name="Barry K."/>
            <person name="Detter J.C."/>
            <person name="Glavina del Rio T."/>
            <person name="Hammon N."/>
            <person name="Israni S."/>
            <person name="Dalin E."/>
            <person name="Tice H."/>
            <person name="Pitluck S."/>
            <person name="Di Bartolo G."/>
            <person name="Chain P."/>
            <person name="Malfatti S."/>
            <person name="Shin M."/>
            <person name="Vergez L."/>
            <person name="Schmutz J."/>
            <person name="Larimer F."/>
            <person name="Land M."/>
            <person name="Hauser L."/>
            <person name="Worsham P."/>
            <person name="Chu M."/>
            <person name="Bearden S."/>
            <person name="Garcia E."/>
            <person name="Richardson P."/>
        </authorList>
    </citation>
    <scope>NUCLEOTIDE SEQUENCE [LARGE SCALE GENOMIC DNA]</scope>
    <source>
        <strain>Pestoides F</strain>
    </source>
</reference>
<feature type="chain" id="PRO_1000001357" description="LexA repressor">
    <location>
        <begin position="1"/>
        <end position="202"/>
    </location>
</feature>
<feature type="DNA-binding region" description="H-T-H motif" evidence="1">
    <location>
        <begin position="28"/>
        <end position="48"/>
    </location>
</feature>
<feature type="active site" description="For autocatalytic cleavage activity" evidence="1">
    <location>
        <position position="119"/>
    </location>
</feature>
<feature type="active site" description="For autocatalytic cleavage activity" evidence="1">
    <location>
        <position position="156"/>
    </location>
</feature>
<feature type="site" description="Cleavage; by autolysis" evidence="1">
    <location>
        <begin position="84"/>
        <end position="85"/>
    </location>
</feature>
<gene>
    <name evidence="1" type="primary">lexA</name>
    <name type="ordered locus">YPDSF_3657</name>
</gene>
<name>LEXA_YERPP</name>
<protein>
    <recommendedName>
        <fullName evidence="1">LexA repressor</fullName>
        <ecNumber evidence="1">3.4.21.88</ecNumber>
    </recommendedName>
</protein>
<comment type="function">
    <text evidence="1">Represses a number of genes involved in the response to DNA damage (SOS response), including recA and lexA. Binds to the 16 bp palindromic sequence 5'-CTGTATATATATACAG-3'. In the presence of single-stranded DNA, RecA interacts with LexA causing an autocatalytic cleavage which disrupts the DNA-binding part of LexA, leading to derepression of the SOS regulon and eventually DNA repair.</text>
</comment>
<comment type="catalytic activity">
    <reaction evidence="1">
        <text>Hydrolysis of Ala-|-Gly bond in repressor LexA.</text>
        <dbReference type="EC" id="3.4.21.88"/>
    </reaction>
</comment>
<comment type="subunit">
    <text evidence="1">Homodimer.</text>
</comment>
<comment type="similarity">
    <text evidence="1">Belongs to the peptidase S24 family.</text>
</comment>
<organism>
    <name type="scientific">Yersinia pestis (strain Pestoides F)</name>
    <dbReference type="NCBI Taxonomy" id="386656"/>
    <lineage>
        <taxon>Bacteria</taxon>
        <taxon>Pseudomonadati</taxon>
        <taxon>Pseudomonadota</taxon>
        <taxon>Gammaproteobacteria</taxon>
        <taxon>Enterobacterales</taxon>
        <taxon>Yersiniaceae</taxon>
        <taxon>Yersinia</taxon>
    </lineage>
</organism>
<proteinExistence type="inferred from homology"/>
<accession>A4TRU5</accession>
<keyword id="KW-0068">Autocatalytic cleavage</keyword>
<keyword id="KW-0227">DNA damage</keyword>
<keyword id="KW-0234">DNA repair</keyword>
<keyword id="KW-0235">DNA replication</keyword>
<keyword id="KW-0238">DNA-binding</keyword>
<keyword id="KW-0378">Hydrolase</keyword>
<keyword id="KW-0678">Repressor</keyword>
<keyword id="KW-0742">SOS response</keyword>
<keyword id="KW-0804">Transcription</keyword>
<keyword id="KW-0805">Transcription regulation</keyword>
<sequence>MKALTTRQQEVYDLVRDHLAQTGMPPTRAEIAQRLGFRSPNAAEEHLKALARKGVIEIVSGASRGIRLLMEEEEGLPLIGRVAAGEPLLAQQHIEGHYKVDPSLFKPGADFLLRVNGMSMRDIGILDGDLLAVHKTQDVRNGQVVVARIDDEVTVKRLKKQGNIVHLLPENSEFQPIVVDLREQSFTIEGLAVGVIRNGDWI</sequence>